<organism>
    <name type="scientific">Helicobacter pylori (strain ATCC 700392 / 26695)</name>
    <name type="common">Campylobacter pylori</name>
    <dbReference type="NCBI Taxonomy" id="85962"/>
    <lineage>
        <taxon>Bacteria</taxon>
        <taxon>Pseudomonadati</taxon>
        <taxon>Campylobacterota</taxon>
        <taxon>Epsilonproteobacteria</taxon>
        <taxon>Campylobacterales</taxon>
        <taxon>Helicobacteraceae</taxon>
        <taxon>Helicobacter</taxon>
    </lineage>
</organism>
<name>SYS_HELPY</name>
<evidence type="ECO:0000255" key="1">
    <source>
        <dbReference type="HAMAP-Rule" id="MF_00176"/>
    </source>
</evidence>
<comment type="function">
    <text evidence="1">Catalyzes the attachment of serine to tRNA(Ser). Is also able to aminoacylate tRNA(Sec) with serine, to form the misacylated tRNA L-seryl-tRNA(Sec), which will be further converted into selenocysteinyl-tRNA(Sec).</text>
</comment>
<comment type="catalytic activity">
    <reaction evidence="1">
        <text>tRNA(Ser) + L-serine + ATP = L-seryl-tRNA(Ser) + AMP + diphosphate + H(+)</text>
        <dbReference type="Rhea" id="RHEA:12292"/>
        <dbReference type="Rhea" id="RHEA-COMP:9669"/>
        <dbReference type="Rhea" id="RHEA-COMP:9703"/>
        <dbReference type="ChEBI" id="CHEBI:15378"/>
        <dbReference type="ChEBI" id="CHEBI:30616"/>
        <dbReference type="ChEBI" id="CHEBI:33019"/>
        <dbReference type="ChEBI" id="CHEBI:33384"/>
        <dbReference type="ChEBI" id="CHEBI:78442"/>
        <dbReference type="ChEBI" id="CHEBI:78533"/>
        <dbReference type="ChEBI" id="CHEBI:456215"/>
        <dbReference type="EC" id="6.1.1.11"/>
    </reaction>
</comment>
<comment type="catalytic activity">
    <reaction evidence="1">
        <text>tRNA(Sec) + L-serine + ATP = L-seryl-tRNA(Sec) + AMP + diphosphate + H(+)</text>
        <dbReference type="Rhea" id="RHEA:42580"/>
        <dbReference type="Rhea" id="RHEA-COMP:9742"/>
        <dbReference type="Rhea" id="RHEA-COMP:10128"/>
        <dbReference type="ChEBI" id="CHEBI:15378"/>
        <dbReference type="ChEBI" id="CHEBI:30616"/>
        <dbReference type="ChEBI" id="CHEBI:33019"/>
        <dbReference type="ChEBI" id="CHEBI:33384"/>
        <dbReference type="ChEBI" id="CHEBI:78442"/>
        <dbReference type="ChEBI" id="CHEBI:78533"/>
        <dbReference type="ChEBI" id="CHEBI:456215"/>
        <dbReference type="EC" id="6.1.1.11"/>
    </reaction>
</comment>
<comment type="pathway">
    <text evidence="1">Aminoacyl-tRNA biosynthesis; selenocysteinyl-tRNA(Sec) biosynthesis; L-seryl-tRNA(Sec) from L-serine and tRNA(Sec): step 1/1.</text>
</comment>
<comment type="subunit">
    <text evidence="1">Homodimer. The tRNA molecule binds across the dimer.</text>
</comment>
<comment type="subcellular location">
    <subcellularLocation>
        <location evidence="1">Cytoplasm</location>
    </subcellularLocation>
</comment>
<comment type="domain">
    <text evidence="1">Consists of two distinct domains, a catalytic core and a N-terminal extension that is involved in tRNA binding.</text>
</comment>
<comment type="similarity">
    <text evidence="1">Belongs to the class-II aminoacyl-tRNA synthetase family. Type-1 seryl-tRNA synthetase subfamily.</text>
</comment>
<gene>
    <name evidence="1" type="primary">serS</name>
    <name type="ordered locus">HP_1480</name>
</gene>
<proteinExistence type="inferred from homology"/>
<dbReference type="EC" id="6.1.1.11" evidence="1"/>
<dbReference type="EMBL" id="AE000511">
    <property type="protein sequence ID" value="AAD08517.1"/>
    <property type="molecule type" value="Genomic_DNA"/>
</dbReference>
<dbReference type="PIR" id="H64704">
    <property type="entry name" value="H64704"/>
</dbReference>
<dbReference type="RefSeq" id="NP_208271.1">
    <property type="nucleotide sequence ID" value="NC_000915.1"/>
</dbReference>
<dbReference type="RefSeq" id="WP_000567145.1">
    <property type="nucleotide sequence ID" value="NC_018939.1"/>
</dbReference>
<dbReference type="SMR" id="P56458"/>
<dbReference type="FunCoup" id="P56458">
    <property type="interactions" value="361"/>
</dbReference>
<dbReference type="STRING" id="85962.HP_1480"/>
<dbReference type="PaxDb" id="85962-C694_07665"/>
<dbReference type="EnsemblBacteria" id="AAD08517">
    <property type="protein sequence ID" value="AAD08517"/>
    <property type="gene ID" value="HP_1480"/>
</dbReference>
<dbReference type="KEGG" id="heo:C694_07665"/>
<dbReference type="KEGG" id="hpy:HP_1480"/>
<dbReference type="PATRIC" id="fig|85962.47.peg.1591"/>
<dbReference type="eggNOG" id="COG0172">
    <property type="taxonomic scope" value="Bacteria"/>
</dbReference>
<dbReference type="InParanoid" id="P56458"/>
<dbReference type="OrthoDB" id="9804647at2"/>
<dbReference type="PhylomeDB" id="P56458"/>
<dbReference type="UniPathway" id="UPA00906">
    <property type="reaction ID" value="UER00895"/>
</dbReference>
<dbReference type="Proteomes" id="UP000000429">
    <property type="component" value="Chromosome"/>
</dbReference>
<dbReference type="GO" id="GO:0005737">
    <property type="term" value="C:cytoplasm"/>
    <property type="evidence" value="ECO:0007669"/>
    <property type="project" value="UniProtKB-SubCell"/>
</dbReference>
<dbReference type="GO" id="GO:0005524">
    <property type="term" value="F:ATP binding"/>
    <property type="evidence" value="ECO:0007669"/>
    <property type="project" value="UniProtKB-UniRule"/>
</dbReference>
<dbReference type="GO" id="GO:0004828">
    <property type="term" value="F:serine-tRNA ligase activity"/>
    <property type="evidence" value="ECO:0007669"/>
    <property type="project" value="UniProtKB-UniRule"/>
</dbReference>
<dbReference type="GO" id="GO:0016260">
    <property type="term" value="P:selenocysteine biosynthetic process"/>
    <property type="evidence" value="ECO:0007669"/>
    <property type="project" value="UniProtKB-UniRule"/>
</dbReference>
<dbReference type="GO" id="GO:0006434">
    <property type="term" value="P:seryl-tRNA aminoacylation"/>
    <property type="evidence" value="ECO:0007669"/>
    <property type="project" value="UniProtKB-UniRule"/>
</dbReference>
<dbReference type="CDD" id="cd00770">
    <property type="entry name" value="SerRS_core"/>
    <property type="match status" value="1"/>
</dbReference>
<dbReference type="Gene3D" id="3.30.930.10">
    <property type="entry name" value="Bira Bifunctional Protein, Domain 2"/>
    <property type="match status" value="1"/>
</dbReference>
<dbReference type="Gene3D" id="1.10.287.40">
    <property type="entry name" value="Serine-tRNA synthetase, tRNA binding domain"/>
    <property type="match status" value="1"/>
</dbReference>
<dbReference type="HAMAP" id="MF_00176">
    <property type="entry name" value="Ser_tRNA_synth_type1"/>
    <property type="match status" value="1"/>
</dbReference>
<dbReference type="InterPro" id="IPR002314">
    <property type="entry name" value="aa-tRNA-synt_IIb"/>
</dbReference>
<dbReference type="InterPro" id="IPR006195">
    <property type="entry name" value="aa-tRNA-synth_II"/>
</dbReference>
<dbReference type="InterPro" id="IPR045864">
    <property type="entry name" value="aa-tRNA-synth_II/BPL/LPL"/>
</dbReference>
<dbReference type="InterPro" id="IPR002317">
    <property type="entry name" value="Ser-tRNA-ligase_type_1"/>
</dbReference>
<dbReference type="InterPro" id="IPR015866">
    <property type="entry name" value="Ser-tRNA-synth_1_N"/>
</dbReference>
<dbReference type="InterPro" id="IPR042103">
    <property type="entry name" value="SerRS_1_N_sf"/>
</dbReference>
<dbReference type="InterPro" id="IPR033729">
    <property type="entry name" value="SerRS_core"/>
</dbReference>
<dbReference type="InterPro" id="IPR010978">
    <property type="entry name" value="tRNA-bd_arm"/>
</dbReference>
<dbReference type="NCBIfam" id="TIGR00414">
    <property type="entry name" value="serS"/>
    <property type="match status" value="1"/>
</dbReference>
<dbReference type="PANTHER" id="PTHR43697:SF1">
    <property type="entry name" value="SERINE--TRNA LIGASE"/>
    <property type="match status" value="1"/>
</dbReference>
<dbReference type="PANTHER" id="PTHR43697">
    <property type="entry name" value="SERYL-TRNA SYNTHETASE"/>
    <property type="match status" value="1"/>
</dbReference>
<dbReference type="Pfam" id="PF02403">
    <property type="entry name" value="Seryl_tRNA_N"/>
    <property type="match status" value="1"/>
</dbReference>
<dbReference type="Pfam" id="PF00587">
    <property type="entry name" value="tRNA-synt_2b"/>
    <property type="match status" value="1"/>
</dbReference>
<dbReference type="PIRSF" id="PIRSF001529">
    <property type="entry name" value="Ser-tRNA-synth_IIa"/>
    <property type="match status" value="1"/>
</dbReference>
<dbReference type="PRINTS" id="PR00981">
    <property type="entry name" value="TRNASYNTHSER"/>
</dbReference>
<dbReference type="SUPFAM" id="SSF55681">
    <property type="entry name" value="Class II aaRS and biotin synthetases"/>
    <property type="match status" value="1"/>
</dbReference>
<dbReference type="SUPFAM" id="SSF46589">
    <property type="entry name" value="tRNA-binding arm"/>
    <property type="match status" value="1"/>
</dbReference>
<dbReference type="PROSITE" id="PS50862">
    <property type="entry name" value="AA_TRNA_LIGASE_II"/>
    <property type="match status" value="1"/>
</dbReference>
<feature type="chain" id="PRO_0000122059" description="Serine--tRNA ligase">
    <location>
        <begin position="1"/>
        <end position="415"/>
    </location>
</feature>
<feature type="binding site" evidence="1">
    <location>
        <begin position="231"/>
        <end position="233"/>
    </location>
    <ligand>
        <name>L-serine</name>
        <dbReference type="ChEBI" id="CHEBI:33384"/>
    </ligand>
</feature>
<feature type="binding site" evidence="1">
    <location>
        <begin position="262"/>
        <end position="264"/>
    </location>
    <ligand>
        <name>ATP</name>
        <dbReference type="ChEBI" id="CHEBI:30616"/>
    </ligand>
</feature>
<feature type="binding site" evidence="1">
    <location>
        <position position="285"/>
    </location>
    <ligand>
        <name>L-serine</name>
        <dbReference type="ChEBI" id="CHEBI:33384"/>
    </ligand>
</feature>
<feature type="binding site" evidence="1">
    <location>
        <begin position="349"/>
        <end position="352"/>
    </location>
    <ligand>
        <name>ATP</name>
        <dbReference type="ChEBI" id="CHEBI:30616"/>
    </ligand>
</feature>
<feature type="binding site" evidence="1">
    <location>
        <position position="383"/>
    </location>
    <ligand>
        <name>L-serine</name>
        <dbReference type="ChEBI" id="CHEBI:33384"/>
    </ligand>
</feature>
<keyword id="KW-0030">Aminoacyl-tRNA synthetase</keyword>
<keyword id="KW-0067">ATP-binding</keyword>
<keyword id="KW-0963">Cytoplasm</keyword>
<keyword id="KW-0436">Ligase</keyword>
<keyword id="KW-0547">Nucleotide-binding</keyword>
<keyword id="KW-0648">Protein biosynthesis</keyword>
<keyword id="KW-1185">Reference proteome</keyword>
<accession>P56458</accession>
<sequence length="415" mass="47444">MIDRKLLLQDFDKVALSLKKRNNAMDDELERLREVITHYKKRLIELEGLQAFQNKVSKEFGIKMAQKVDTSDLKKELENNKIKLNELSKSVGELEQQIDLKLSIIPNLVDEKTPLGTNEEDNIEIKKILTPRVFTFKPKEHFELAQQNGWIDFESGVKLAKSRFSVIRGFGAKIYRALIHLMLDFNEKNGFEIIYTPALVNEKMLFGTGQLPKFKEDVFKIENENLYLIPTAEVTLTNLYNDTIISVENLPIKMTAHTPCFRSEAGSAGKDTRGMIRQHQFDKVELVAITHPKESDVMQEHMLESASEILKALELPHRFVQLCSGDLGFSASNTIDIEVWLPGQNCYREISSVSNTRDFQARRAKIRFKENQKNQLAHTLNGSSLAVGRTMVALMENHQQADGSIHIPKALEKYL</sequence>
<protein>
    <recommendedName>
        <fullName evidence="1">Serine--tRNA ligase</fullName>
        <ecNumber evidence="1">6.1.1.11</ecNumber>
    </recommendedName>
    <alternativeName>
        <fullName evidence="1">Seryl-tRNA synthetase</fullName>
        <shortName evidence="1">SerRS</shortName>
    </alternativeName>
    <alternativeName>
        <fullName evidence="1">Seryl-tRNA(Ser/Sec) synthetase</fullName>
    </alternativeName>
</protein>
<reference key="1">
    <citation type="journal article" date="1997" name="Nature">
        <title>The complete genome sequence of the gastric pathogen Helicobacter pylori.</title>
        <authorList>
            <person name="Tomb J.-F."/>
            <person name="White O."/>
            <person name="Kerlavage A.R."/>
            <person name="Clayton R.A."/>
            <person name="Sutton G.G."/>
            <person name="Fleischmann R.D."/>
            <person name="Ketchum K.A."/>
            <person name="Klenk H.-P."/>
            <person name="Gill S.R."/>
            <person name="Dougherty B.A."/>
            <person name="Nelson K.E."/>
            <person name="Quackenbush J."/>
            <person name="Zhou L."/>
            <person name="Kirkness E.F."/>
            <person name="Peterson S.N."/>
            <person name="Loftus B.J."/>
            <person name="Richardson D.L."/>
            <person name="Dodson R.J."/>
            <person name="Khalak H.G."/>
            <person name="Glodek A."/>
            <person name="McKenney K."/>
            <person name="FitzGerald L.M."/>
            <person name="Lee N."/>
            <person name="Adams M.D."/>
            <person name="Hickey E.K."/>
            <person name="Berg D.E."/>
            <person name="Gocayne J.D."/>
            <person name="Utterback T.R."/>
            <person name="Peterson J.D."/>
            <person name="Kelley J.M."/>
            <person name="Cotton M.D."/>
            <person name="Weidman J.F."/>
            <person name="Fujii C."/>
            <person name="Bowman C."/>
            <person name="Watthey L."/>
            <person name="Wallin E."/>
            <person name="Hayes W.S."/>
            <person name="Borodovsky M."/>
            <person name="Karp P.D."/>
            <person name="Smith H.O."/>
            <person name="Fraser C.M."/>
            <person name="Venter J.C."/>
        </authorList>
    </citation>
    <scope>NUCLEOTIDE SEQUENCE [LARGE SCALE GENOMIC DNA]</scope>
    <source>
        <strain>ATCC 700392 / 26695</strain>
    </source>
</reference>